<name>TRUA_NEIG1</name>
<keyword id="KW-0413">Isomerase</keyword>
<keyword id="KW-1185">Reference proteome</keyword>
<keyword id="KW-0819">tRNA processing</keyword>
<organism>
    <name type="scientific">Neisseria gonorrhoeae (strain ATCC 700825 / FA 1090)</name>
    <dbReference type="NCBI Taxonomy" id="242231"/>
    <lineage>
        <taxon>Bacteria</taxon>
        <taxon>Pseudomonadati</taxon>
        <taxon>Pseudomonadota</taxon>
        <taxon>Betaproteobacteria</taxon>
        <taxon>Neisseriales</taxon>
        <taxon>Neisseriaceae</taxon>
        <taxon>Neisseria</taxon>
    </lineage>
</organism>
<feature type="chain" id="PRO_0000057418" description="tRNA pseudouridine synthase A">
    <location>
        <begin position="1"/>
        <end position="265"/>
    </location>
</feature>
<feature type="active site" description="Nucleophile" evidence="1">
    <location>
        <position position="58"/>
    </location>
</feature>
<feature type="binding site" evidence="1">
    <location>
        <position position="116"/>
    </location>
    <ligand>
        <name>substrate</name>
    </ligand>
</feature>
<reference key="1">
    <citation type="submission" date="2003-03" db="EMBL/GenBank/DDBJ databases">
        <title>The complete genome sequence of Neisseria gonorrhoeae.</title>
        <authorList>
            <person name="Lewis L.A."/>
            <person name="Gillaspy A.F."/>
            <person name="McLaughlin R.E."/>
            <person name="Gipson M."/>
            <person name="Ducey T.F."/>
            <person name="Ownbey T."/>
            <person name="Hartman K."/>
            <person name="Nydick C."/>
            <person name="Carson M.B."/>
            <person name="Vaughn J."/>
            <person name="Thomson C."/>
            <person name="Song L."/>
            <person name="Lin S."/>
            <person name="Yuan X."/>
            <person name="Najar F."/>
            <person name="Zhan M."/>
            <person name="Ren Q."/>
            <person name="Zhu H."/>
            <person name="Qi S."/>
            <person name="Kenton S.M."/>
            <person name="Lai H."/>
            <person name="White J.D."/>
            <person name="Clifton S."/>
            <person name="Roe B.A."/>
            <person name="Dyer D.W."/>
        </authorList>
    </citation>
    <scope>NUCLEOTIDE SEQUENCE [LARGE SCALE GENOMIC DNA]</scope>
    <source>
        <strain>ATCC 700825 / FA 1090</strain>
    </source>
</reference>
<sequence length="265" mass="28806">MDTAQKQRWAITLSYDGSRFYGWQKQAGGVPTVQAALETALARIAGESVATTVAGRTDTGVHATAQVVHFDTAAVRPAQAWIRGVNAHLPEGIAVLHARQVAPGFHARFDASGRHYRYLLESAPVRSPLLKNRAGWTHLELDIGPMRRAAALLVGEQDFSSFRAAGCQAKSPVKTIYRADLTQSAGLVRLDLHGNAFLHHMVRNIMGALVYVGSGRLSVEGFAALIQERSRLKAPPTFMPDGLYLTGVDYPGAYGIVRPQIPEWL</sequence>
<proteinExistence type="inferred from homology"/>
<gene>
    <name evidence="1" type="primary">truA</name>
    <name type="ordered locus">NGO_1811</name>
</gene>
<dbReference type="EC" id="5.4.99.12" evidence="1"/>
<dbReference type="EMBL" id="AE004969">
    <property type="protein sequence ID" value="AAW90429.1"/>
    <property type="molecule type" value="Genomic_DNA"/>
</dbReference>
<dbReference type="RefSeq" id="WP_010951355.1">
    <property type="nucleotide sequence ID" value="NC_002946.2"/>
</dbReference>
<dbReference type="RefSeq" id="YP_208841.1">
    <property type="nucleotide sequence ID" value="NC_002946.2"/>
</dbReference>
<dbReference type="SMR" id="Q5F5V8"/>
<dbReference type="STRING" id="242231.NGO_1811"/>
<dbReference type="KEGG" id="ngo:NGO_1811"/>
<dbReference type="PATRIC" id="fig|242231.10.peg.2174"/>
<dbReference type="HOGENOM" id="CLU_014673_0_2_4"/>
<dbReference type="Proteomes" id="UP000000535">
    <property type="component" value="Chromosome"/>
</dbReference>
<dbReference type="GO" id="GO:0003723">
    <property type="term" value="F:RNA binding"/>
    <property type="evidence" value="ECO:0007669"/>
    <property type="project" value="InterPro"/>
</dbReference>
<dbReference type="GO" id="GO:0160147">
    <property type="term" value="F:tRNA pseudouridine(38-40) synthase activity"/>
    <property type="evidence" value="ECO:0007669"/>
    <property type="project" value="UniProtKB-EC"/>
</dbReference>
<dbReference type="GO" id="GO:0031119">
    <property type="term" value="P:tRNA pseudouridine synthesis"/>
    <property type="evidence" value="ECO:0007669"/>
    <property type="project" value="UniProtKB-UniRule"/>
</dbReference>
<dbReference type="CDD" id="cd02570">
    <property type="entry name" value="PseudoU_synth_EcTruA"/>
    <property type="match status" value="1"/>
</dbReference>
<dbReference type="FunFam" id="3.30.70.580:FF:000001">
    <property type="entry name" value="tRNA pseudouridine synthase A"/>
    <property type="match status" value="1"/>
</dbReference>
<dbReference type="FunFam" id="3.30.70.660:FF:000016">
    <property type="entry name" value="tRNA pseudouridine synthase A"/>
    <property type="match status" value="1"/>
</dbReference>
<dbReference type="Gene3D" id="3.30.70.660">
    <property type="entry name" value="Pseudouridine synthase I, catalytic domain, C-terminal subdomain"/>
    <property type="match status" value="1"/>
</dbReference>
<dbReference type="Gene3D" id="3.30.70.580">
    <property type="entry name" value="Pseudouridine synthase I, catalytic domain, N-terminal subdomain"/>
    <property type="match status" value="1"/>
</dbReference>
<dbReference type="HAMAP" id="MF_00171">
    <property type="entry name" value="TruA"/>
    <property type="match status" value="1"/>
</dbReference>
<dbReference type="InterPro" id="IPR020103">
    <property type="entry name" value="PsdUridine_synth_cat_dom_sf"/>
</dbReference>
<dbReference type="InterPro" id="IPR001406">
    <property type="entry name" value="PsdUridine_synth_TruA"/>
</dbReference>
<dbReference type="InterPro" id="IPR020097">
    <property type="entry name" value="PsdUridine_synth_TruA_a/b_dom"/>
</dbReference>
<dbReference type="InterPro" id="IPR020095">
    <property type="entry name" value="PsdUridine_synth_TruA_C"/>
</dbReference>
<dbReference type="InterPro" id="IPR020094">
    <property type="entry name" value="TruA/RsuA/RluB/E/F_N"/>
</dbReference>
<dbReference type="NCBIfam" id="TIGR00071">
    <property type="entry name" value="hisT_truA"/>
    <property type="match status" value="1"/>
</dbReference>
<dbReference type="PANTHER" id="PTHR11142">
    <property type="entry name" value="PSEUDOURIDYLATE SYNTHASE"/>
    <property type="match status" value="1"/>
</dbReference>
<dbReference type="PANTHER" id="PTHR11142:SF0">
    <property type="entry name" value="TRNA PSEUDOURIDINE SYNTHASE-LIKE 1"/>
    <property type="match status" value="1"/>
</dbReference>
<dbReference type="Pfam" id="PF01416">
    <property type="entry name" value="PseudoU_synth_1"/>
    <property type="match status" value="2"/>
</dbReference>
<dbReference type="PIRSF" id="PIRSF001430">
    <property type="entry name" value="tRNA_psdUrid_synth"/>
    <property type="match status" value="1"/>
</dbReference>
<dbReference type="SUPFAM" id="SSF55120">
    <property type="entry name" value="Pseudouridine synthase"/>
    <property type="match status" value="1"/>
</dbReference>
<evidence type="ECO:0000255" key="1">
    <source>
        <dbReference type="HAMAP-Rule" id="MF_00171"/>
    </source>
</evidence>
<protein>
    <recommendedName>
        <fullName evidence="1">tRNA pseudouridine synthase A</fullName>
        <ecNumber evidence="1">5.4.99.12</ecNumber>
    </recommendedName>
    <alternativeName>
        <fullName evidence="1">tRNA pseudouridine(38-40) synthase</fullName>
    </alternativeName>
    <alternativeName>
        <fullName evidence="1">tRNA pseudouridylate synthase I</fullName>
    </alternativeName>
    <alternativeName>
        <fullName evidence="1">tRNA-uridine isomerase I</fullName>
    </alternativeName>
</protein>
<accession>Q5F5V8</accession>
<comment type="function">
    <text evidence="1">Formation of pseudouridine at positions 38, 39 and 40 in the anticodon stem and loop of transfer RNAs.</text>
</comment>
<comment type="catalytic activity">
    <reaction evidence="1">
        <text>uridine(38/39/40) in tRNA = pseudouridine(38/39/40) in tRNA</text>
        <dbReference type="Rhea" id="RHEA:22376"/>
        <dbReference type="Rhea" id="RHEA-COMP:10085"/>
        <dbReference type="Rhea" id="RHEA-COMP:10087"/>
        <dbReference type="ChEBI" id="CHEBI:65314"/>
        <dbReference type="ChEBI" id="CHEBI:65315"/>
        <dbReference type="EC" id="5.4.99.12"/>
    </reaction>
</comment>
<comment type="subunit">
    <text evidence="1">Homodimer.</text>
</comment>
<comment type="similarity">
    <text evidence="1">Belongs to the tRNA pseudouridine synthase TruA family.</text>
</comment>